<sequence length="31" mass="3450">MFTLTSYFGFLLAALTITSALFIGLNKIRLI</sequence>
<name>PETL_SPIOL</name>
<geneLocation type="chloroplast"/>
<organism>
    <name type="scientific">Spinacia oleracea</name>
    <name type="common">Spinach</name>
    <dbReference type="NCBI Taxonomy" id="3562"/>
    <lineage>
        <taxon>Eukaryota</taxon>
        <taxon>Viridiplantae</taxon>
        <taxon>Streptophyta</taxon>
        <taxon>Embryophyta</taxon>
        <taxon>Tracheophyta</taxon>
        <taxon>Spermatophyta</taxon>
        <taxon>Magnoliopsida</taxon>
        <taxon>eudicotyledons</taxon>
        <taxon>Gunneridae</taxon>
        <taxon>Pentapetalae</taxon>
        <taxon>Caryophyllales</taxon>
        <taxon>Chenopodiaceae</taxon>
        <taxon>Chenopodioideae</taxon>
        <taxon>Anserineae</taxon>
        <taxon>Spinacia</taxon>
    </lineage>
</organism>
<keyword id="KW-0002">3D-structure</keyword>
<keyword id="KW-0150">Chloroplast</keyword>
<keyword id="KW-0249">Electron transport</keyword>
<keyword id="KW-0472">Membrane</keyword>
<keyword id="KW-0602">Photosynthesis</keyword>
<keyword id="KW-0934">Plastid</keyword>
<keyword id="KW-1185">Reference proteome</keyword>
<keyword id="KW-0691">RNA editing</keyword>
<keyword id="KW-0793">Thylakoid</keyword>
<keyword id="KW-0812">Transmembrane</keyword>
<keyword id="KW-1133">Transmembrane helix</keyword>
<keyword id="KW-0813">Transport</keyword>
<protein>
    <recommendedName>
        <fullName evidence="1">Cytochrome b6-f complex subunit 6</fullName>
    </recommendedName>
    <alternativeName>
        <fullName evidence="1">Cytochrome b6-f complex subunit PetL</fullName>
    </alternativeName>
    <alternativeName>
        <fullName evidence="1">Cytochrome b6-f complex subunit VI</fullName>
    </alternativeName>
</protein>
<accession>Q9M3L0</accession>
<accession>Q5K3T0</accession>
<comment type="function">
    <text evidence="1">Component of the cytochrome b6-f complex, which mediates electron transfer between photosystem II (PSII) and photosystem I (PSI), cyclic electron flow around PSI, and state transitions. PetL is important for photoautotrophic growth as well as for electron transfer efficiency and stability of the cytochrome b6-f complex.</text>
</comment>
<comment type="subunit">
    <text evidence="1">The 4 large subunits of the cytochrome b6-f complex are cytochrome b6, subunit IV (17 kDa polypeptide, PetD), cytochrome f and the Rieske protein, while the 4 small subunits are PetG, PetL, PetM and PetN. The complex functions as a dimer.</text>
</comment>
<comment type="subcellular location">
    <subcellularLocation>
        <location evidence="1">Plastid</location>
        <location evidence="1">Chloroplast thylakoid membrane</location>
        <topology evidence="1">Single-pass membrane protein</topology>
    </subcellularLocation>
</comment>
<comment type="RNA editing">
    <location>
        <position position="2" evidence="2"/>
    </location>
</comment>
<comment type="similarity">
    <text evidence="1">Belongs to the PetL family.</text>
</comment>
<feature type="chain" id="PRO_0000220481" description="Cytochrome b6-f complex subunit 6">
    <location>
        <begin position="1"/>
        <end position="31"/>
    </location>
</feature>
<feature type="transmembrane region" description="Helical" evidence="1">
    <location>
        <begin position="4"/>
        <end position="26"/>
    </location>
</feature>
<feature type="helix" evidence="3">
    <location>
        <begin position="2"/>
        <end position="27"/>
    </location>
</feature>
<evidence type="ECO:0000255" key="1">
    <source>
        <dbReference type="HAMAP-Rule" id="MF_00433"/>
    </source>
</evidence>
<evidence type="ECO:0000269" key="2">
    <source>
    </source>
</evidence>
<evidence type="ECO:0007829" key="3">
    <source>
        <dbReference type="PDB" id="9ES7"/>
    </source>
</evidence>
<gene>
    <name evidence="1" type="primary">petL</name>
</gene>
<dbReference type="EMBL" id="AJ400848">
    <property type="protein sequence ID" value="CAB88746.1"/>
    <property type="status" value="ALT_SEQ"/>
    <property type="molecule type" value="Genomic_DNA"/>
</dbReference>
<dbReference type="EMBL" id="AJ704434">
    <property type="protein sequence ID" value="CAG28646.1"/>
    <property type="molecule type" value="Genomic_DNA"/>
</dbReference>
<dbReference type="RefSeq" id="NP_054953.1">
    <property type="nucleotide sequence ID" value="NC_002202.1"/>
</dbReference>
<dbReference type="PDB" id="6RQF">
    <property type="method" value="EM"/>
    <property type="resolution" value="3.58 A"/>
    <property type="chains" value="E/M=1-31"/>
</dbReference>
<dbReference type="PDB" id="7QRM">
    <property type="method" value="EM"/>
    <property type="resolution" value="2.70 A"/>
    <property type="chains" value="E/M=1-31"/>
</dbReference>
<dbReference type="PDB" id="7ZYV">
    <property type="method" value="EM"/>
    <property type="resolution" value="2.13 A"/>
    <property type="chains" value="E/M=1-31"/>
</dbReference>
<dbReference type="PDB" id="9ES7">
    <property type="method" value="EM"/>
    <property type="resolution" value="1.94 A"/>
    <property type="chains" value="E/M=1-31"/>
</dbReference>
<dbReference type="PDB" id="9ES8">
    <property type="method" value="EM"/>
    <property type="resolution" value="2.24 A"/>
    <property type="chains" value="E/M=1-31"/>
</dbReference>
<dbReference type="PDB" id="9ES9">
    <property type="method" value="EM"/>
    <property type="resolution" value="2.33 A"/>
    <property type="chains" value="E/M=1-31"/>
</dbReference>
<dbReference type="PDBsum" id="6RQF"/>
<dbReference type="PDBsum" id="7QRM"/>
<dbReference type="PDBsum" id="7ZYV"/>
<dbReference type="PDBsum" id="9ES7"/>
<dbReference type="PDBsum" id="9ES8"/>
<dbReference type="PDBsum" id="9ES9"/>
<dbReference type="EMDB" id="EMD-19938"/>
<dbReference type="EMDB" id="EMD-19939"/>
<dbReference type="EMDB" id="EMD-19940"/>
<dbReference type="SMR" id="Q9M3L0"/>
<dbReference type="IntAct" id="Q9M3L0">
    <property type="interactions" value="1"/>
</dbReference>
<dbReference type="STRING" id="3562.Q9M3L0"/>
<dbReference type="GeneID" id="2715601"/>
<dbReference type="KEGG" id="soe:2715601"/>
<dbReference type="InParanoid" id="Q9M3L0"/>
<dbReference type="OrthoDB" id="738066at2759"/>
<dbReference type="Proteomes" id="UP001155700">
    <property type="component" value="Chloroplast Pltd"/>
</dbReference>
<dbReference type="GO" id="GO:0009535">
    <property type="term" value="C:chloroplast thylakoid membrane"/>
    <property type="evidence" value="ECO:0007669"/>
    <property type="project" value="UniProtKB-SubCell"/>
</dbReference>
<dbReference type="GO" id="GO:0009512">
    <property type="term" value="C:cytochrome b6f complex"/>
    <property type="evidence" value="ECO:0007669"/>
    <property type="project" value="InterPro"/>
</dbReference>
<dbReference type="GO" id="GO:0045158">
    <property type="term" value="F:electron transporter, transferring electrons within cytochrome b6/f complex of photosystem II activity"/>
    <property type="evidence" value="ECO:0007669"/>
    <property type="project" value="UniProtKB-UniRule"/>
</dbReference>
<dbReference type="GO" id="GO:0015979">
    <property type="term" value="P:photosynthesis"/>
    <property type="evidence" value="ECO:0007669"/>
    <property type="project" value="UniProtKB-KW"/>
</dbReference>
<dbReference type="HAMAP" id="MF_00433">
    <property type="entry name" value="Cytb6_f_PetL"/>
    <property type="match status" value="1"/>
</dbReference>
<dbReference type="InterPro" id="IPR007802">
    <property type="entry name" value="Cyt_b6/f_cplx_su6"/>
</dbReference>
<dbReference type="PANTHER" id="PTHR37266">
    <property type="entry name" value="CYTOCHROME B6-F COMPLEX SUBUNIT 6"/>
    <property type="match status" value="1"/>
</dbReference>
<dbReference type="PANTHER" id="PTHR37266:SF3">
    <property type="entry name" value="CYTOCHROME B6-F COMPLEX SUBUNIT 6"/>
    <property type="match status" value="1"/>
</dbReference>
<dbReference type="Pfam" id="PF05115">
    <property type="entry name" value="PetL"/>
    <property type="match status" value="1"/>
</dbReference>
<dbReference type="SUPFAM" id="SSF103436">
    <property type="entry name" value="PetL subunit of the cytochrome b6f complex"/>
    <property type="match status" value="1"/>
</dbReference>
<proteinExistence type="evidence at protein level"/>
<reference key="1">
    <citation type="journal article" date="2001" name="Plant Mol. Biol.">
        <title>The plastid chromosome of spinach (Spinacia oleracea): complete nucleotide sequence and gene organization.</title>
        <authorList>
            <person name="Schmitz-Linneweber C."/>
            <person name="Maier R.M."/>
            <person name="Alcaraz J.-P."/>
            <person name="Cottet A."/>
            <person name="Herrmann R.G."/>
            <person name="Mache R."/>
        </authorList>
    </citation>
    <scope>NUCLEOTIDE SEQUENCE [LARGE SCALE GENOMIC DNA]</scope>
    <source>
        <strain>cv. Geant d'hiver</strain>
        <strain>cv. Monatol</strain>
    </source>
</reference>
<reference key="2">
    <citation type="journal article" date="2004" name="Nucleic Acids Res.">
        <title>Rapid evolution of RNA editing sites in a small non-essential plastid gene.</title>
        <authorList>
            <person name="Fiebig A."/>
            <person name="Stegemann S."/>
            <person name="Bock R."/>
        </authorList>
    </citation>
    <scope>NUCLEOTIDE SEQUENCE [GENOMIC DNA]</scope>
    <scope>RNA EDITING</scope>
    <source>
        <tissue>Leaf</tissue>
    </source>
</reference>